<evidence type="ECO:0000255" key="1">
    <source>
        <dbReference type="HAMAP-Rule" id="MF_00277"/>
    </source>
</evidence>
<evidence type="ECO:0000255" key="2">
    <source>
        <dbReference type="PROSITE-ProRule" id="PRU01175"/>
    </source>
</evidence>
<reference key="1">
    <citation type="journal article" date="2006" name="J. Bacteriol.">
        <title>Complete genome sequence of Yersinia pestis strains Antiqua and Nepal516: evidence of gene reduction in an emerging pathogen.</title>
        <authorList>
            <person name="Chain P.S.G."/>
            <person name="Hu P."/>
            <person name="Malfatti S.A."/>
            <person name="Radnedge L."/>
            <person name="Larimer F."/>
            <person name="Vergez L.M."/>
            <person name="Worsham P."/>
            <person name="Chu M.C."/>
            <person name="Andersen G.L."/>
        </authorList>
    </citation>
    <scope>NUCLEOTIDE SEQUENCE [LARGE SCALE GENOMIC DNA]</scope>
    <source>
        <strain>Antiqua</strain>
    </source>
</reference>
<keyword id="KW-0378">Hydrolase</keyword>
<keyword id="KW-0460">Magnesium</keyword>
<keyword id="KW-0511">Multifunctional enzyme</keyword>
<keyword id="KW-0548">Nucleotidyltransferase</keyword>
<keyword id="KW-0677">Repeat</keyword>
<keyword id="KW-0808">Transferase</keyword>
<dbReference type="EC" id="2.7.7.59" evidence="1"/>
<dbReference type="EC" id="3.1.4.-" evidence="1"/>
<dbReference type="EMBL" id="CP000308">
    <property type="protein sequence ID" value="ABG12484.1"/>
    <property type="molecule type" value="Genomic_DNA"/>
</dbReference>
<dbReference type="RefSeq" id="WP_002212129.1">
    <property type="nucleotide sequence ID" value="NZ_CP009906.1"/>
</dbReference>
<dbReference type="SMR" id="Q1CAN8"/>
<dbReference type="GeneID" id="57977519"/>
<dbReference type="KEGG" id="ypa:YPA_0516"/>
<dbReference type="Proteomes" id="UP000001971">
    <property type="component" value="Chromosome"/>
</dbReference>
<dbReference type="GO" id="GO:0008773">
    <property type="term" value="F:[protein-PII] uridylyltransferase activity"/>
    <property type="evidence" value="ECO:0007669"/>
    <property type="project" value="UniProtKB-UniRule"/>
</dbReference>
<dbReference type="GO" id="GO:0008081">
    <property type="term" value="F:phosphoric diester hydrolase activity"/>
    <property type="evidence" value="ECO:0007669"/>
    <property type="project" value="UniProtKB-UniRule"/>
</dbReference>
<dbReference type="GO" id="GO:0006808">
    <property type="term" value="P:regulation of nitrogen utilization"/>
    <property type="evidence" value="ECO:0007669"/>
    <property type="project" value="UniProtKB-UniRule"/>
</dbReference>
<dbReference type="CDD" id="cd04899">
    <property type="entry name" value="ACT_ACR-UUR-like_2"/>
    <property type="match status" value="1"/>
</dbReference>
<dbReference type="CDD" id="cd04900">
    <property type="entry name" value="ACT_UUR-like_1"/>
    <property type="match status" value="1"/>
</dbReference>
<dbReference type="CDD" id="cd00077">
    <property type="entry name" value="HDc"/>
    <property type="match status" value="1"/>
</dbReference>
<dbReference type="CDD" id="cd05401">
    <property type="entry name" value="NT_GlnE_GlnD_like"/>
    <property type="match status" value="1"/>
</dbReference>
<dbReference type="FunFam" id="1.10.3210.10:FF:000005">
    <property type="entry name" value="Bifunctional uridylyltransferase/uridylyl-removing enzyme"/>
    <property type="match status" value="1"/>
</dbReference>
<dbReference type="Gene3D" id="1.10.3210.10">
    <property type="entry name" value="Hypothetical protein af1432"/>
    <property type="match status" value="1"/>
</dbReference>
<dbReference type="HAMAP" id="MF_00277">
    <property type="entry name" value="PII_uridylyl_transf"/>
    <property type="match status" value="1"/>
</dbReference>
<dbReference type="InterPro" id="IPR045865">
    <property type="entry name" value="ACT-like_dom_sf"/>
</dbReference>
<dbReference type="InterPro" id="IPR002912">
    <property type="entry name" value="ACT_dom"/>
</dbReference>
<dbReference type="InterPro" id="IPR003607">
    <property type="entry name" value="HD/PDEase_dom"/>
</dbReference>
<dbReference type="InterPro" id="IPR006674">
    <property type="entry name" value="HD_domain"/>
</dbReference>
<dbReference type="InterPro" id="IPR043519">
    <property type="entry name" value="NT_sf"/>
</dbReference>
<dbReference type="InterPro" id="IPR013546">
    <property type="entry name" value="PII_UdlTrfase/GS_AdlTrfase"/>
</dbReference>
<dbReference type="InterPro" id="IPR002934">
    <property type="entry name" value="Polymerase_NTP_transf_dom"/>
</dbReference>
<dbReference type="InterPro" id="IPR010043">
    <property type="entry name" value="UTase/UR"/>
</dbReference>
<dbReference type="NCBIfam" id="NF002487">
    <property type="entry name" value="PRK01759.1"/>
    <property type="match status" value="1"/>
</dbReference>
<dbReference type="NCBIfam" id="NF003448">
    <property type="entry name" value="PRK05007.1"/>
    <property type="match status" value="1"/>
</dbReference>
<dbReference type="NCBIfam" id="TIGR01693">
    <property type="entry name" value="UTase_glnD"/>
    <property type="match status" value="1"/>
</dbReference>
<dbReference type="PANTHER" id="PTHR47320">
    <property type="entry name" value="BIFUNCTIONAL URIDYLYLTRANSFERASE/URIDYLYL-REMOVING ENZYME"/>
    <property type="match status" value="1"/>
</dbReference>
<dbReference type="PANTHER" id="PTHR47320:SF1">
    <property type="entry name" value="BIFUNCTIONAL URIDYLYLTRANSFERASE_URIDYLYL-REMOVING ENZYME"/>
    <property type="match status" value="1"/>
</dbReference>
<dbReference type="Pfam" id="PF01842">
    <property type="entry name" value="ACT"/>
    <property type="match status" value="1"/>
</dbReference>
<dbReference type="Pfam" id="PF08335">
    <property type="entry name" value="GlnD_UR_UTase"/>
    <property type="match status" value="1"/>
</dbReference>
<dbReference type="Pfam" id="PF01966">
    <property type="entry name" value="HD"/>
    <property type="match status" value="1"/>
</dbReference>
<dbReference type="Pfam" id="PF01909">
    <property type="entry name" value="NTP_transf_2"/>
    <property type="match status" value="1"/>
</dbReference>
<dbReference type="PIRSF" id="PIRSF006288">
    <property type="entry name" value="PII_uridyltransf"/>
    <property type="match status" value="1"/>
</dbReference>
<dbReference type="SMART" id="SM00471">
    <property type="entry name" value="HDc"/>
    <property type="match status" value="1"/>
</dbReference>
<dbReference type="SUPFAM" id="SSF55021">
    <property type="entry name" value="ACT-like"/>
    <property type="match status" value="2"/>
</dbReference>
<dbReference type="SUPFAM" id="SSF109604">
    <property type="entry name" value="HD-domain/PDEase-like"/>
    <property type="match status" value="1"/>
</dbReference>
<dbReference type="SUPFAM" id="SSF81301">
    <property type="entry name" value="Nucleotidyltransferase"/>
    <property type="match status" value="1"/>
</dbReference>
<dbReference type="SUPFAM" id="SSF81593">
    <property type="entry name" value="Nucleotidyltransferase substrate binding subunit/domain"/>
    <property type="match status" value="1"/>
</dbReference>
<dbReference type="SUPFAM" id="SSF81891">
    <property type="entry name" value="Poly A polymerase C-terminal region-like"/>
    <property type="match status" value="1"/>
</dbReference>
<dbReference type="PROSITE" id="PS51671">
    <property type="entry name" value="ACT"/>
    <property type="match status" value="2"/>
</dbReference>
<dbReference type="PROSITE" id="PS51831">
    <property type="entry name" value="HD"/>
    <property type="match status" value="1"/>
</dbReference>
<comment type="function">
    <text evidence="1">Modifies, by uridylylation and deuridylylation, the PII regulatory proteins (GlnB and homologs), in response to the nitrogen status of the cell that GlnD senses through the glutamine level. Under low glutamine levels, catalyzes the conversion of the PII proteins and UTP to PII-UMP and PPi, while under higher glutamine levels, GlnD hydrolyzes PII-UMP to PII and UMP (deuridylylation). Thus, controls uridylylation state and activity of the PII proteins, and plays an important role in the regulation of nitrogen assimilation and metabolism.</text>
</comment>
<comment type="catalytic activity">
    <reaction evidence="1">
        <text>[protein-PII]-L-tyrosine + UTP = [protein-PII]-uridylyl-L-tyrosine + diphosphate</text>
        <dbReference type="Rhea" id="RHEA:13673"/>
        <dbReference type="Rhea" id="RHEA-COMP:12147"/>
        <dbReference type="Rhea" id="RHEA-COMP:12148"/>
        <dbReference type="ChEBI" id="CHEBI:33019"/>
        <dbReference type="ChEBI" id="CHEBI:46398"/>
        <dbReference type="ChEBI" id="CHEBI:46858"/>
        <dbReference type="ChEBI" id="CHEBI:90602"/>
        <dbReference type="EC" id="2.7.7.59"/>
    </reaction>
</comment>
<comment type="catalytic activity">
    <reaction evidence="1">
        <text>[protein-PII]-uridylyl-L-tyrosine + H2O = [protein-PII]-L-tyrosine + UMP + H(+)</text>
        <dbReference type="Rhea" id="RHEA:48600"/>
        <dbReference type="Rhea" id="RHEA-COMP:12147"/>
        <dbReference type="Rhea" id="RHEA-COMP:12148"/>
        <dbReference type="ChEBI" id="CHEBI:15377"/>
        <dbReference type="ChEBI" id="CHEBI:15378"/>
        <dbReference type="ChEBI" id="CHEBI:46858"/>
        <dbReference type="ChEBI" id="CHEBI:57865"/>
        <dbReference type="ChEBI" id="CHEBI:90602"/>
    </reaction>
</comment>
<comment type="cofactor">
    <cofactor evidence="1">
        <name>Mg(2+)</name>
        <dbReference type="ChEBI" id="CHEBI:18420"/>
    </cofactor>
</comment>
<comment type="activity regulation">
    <text evidence="1">Uridylyltransferase (UTase) activity is inhibited by glutamine, while glutamine activates uridylyl-removing (UR) activity.</text>
</comment>
<comment type="domain">
    <text evidence="1">Has four distinct domains: an N-terminal nucleotidyltransferase (NT) domain responsible for UTase activity, a central HD domain that encodes UR activity, and two C-terminal ACT domains that seem to have a role in glutamine sensing.</text>
</comment>
<comment type="similarity">
    <text evidence="1">Belongs to the GlnD family.</text>
</comment>
<accession>Q1CAN8</accession>
<feature type="chain" id="PRO_1000022357" description="Bifunctional uridylyltransferase/uridylyl-removing enzyme">
    <location>
        <begin position="1"/>
        <end position="893"/>
    </location>
</feature>
<feature type="domain" description="HD" evidence="2">
    <location>
        <begin position="470"/>
        <end position="592"/>
    </location>
</feature>
<feature type="domain" description="ACT 1" evidence="1">
    <location>
        <begin position="711"/>
        <end position="793"/>
    </location>
</feature>
<feature type="domain" description="ACT 2" evidence="1">
    <location>
        <begin position="819"/>
        <end position="893"/>
    </location>
</feature>
<feature type="region of interest" description="Uridylyltransferase">
    <location>
        <begin position="1"/>
        <end position="351"/>
    </location>
</feature>
<feature type="region of interest" description="Uridylyl-removing">
    <location>
        <begin position="352"/>
        <end position="710"/>
    </location>
</feature>
<gene>
    <name evidence="1" type="primary">glnD</name>
    <name type="ordered locus">YPA_0516</name>
</gene>
<proteinExistence type="inferred from homology"/>
<protein>
    <recommendedName>
        <fullName evidence="1">Bifunctional uridylyltransferase/uridylyl-removing enzyme</fullName>
        <shortName evidence="1">UTase/UR</shortName>
    </recommendedName>
    <alternativeName>
        <fullName evidence="1">Bifunctional [protein-PII] modification enzyme</fullName>
    </alternativeName>
    <alternativeName>
        <fullName evidence="1">Bifunctional nitrogen sensor protein</fullName>
    </alternativeName>
    <domain>
        <recommendedName>
            <fullName evidence="1">[Protein-PII] uridylyltransferase</fullName>
            <shortName evidence="1">PII uridylyltransferase</shortName>
            <shortName evidence="1">UTase</shortName>
            <ecNumber evidence="1">2.7.7.59</ecNumber>
        </recommendedName>
    </domain>
    <domain>
        <recommendedName>
            <fullName evidence="1">[Protein-PII]-UMP uridylyl-removing enzyme</fullName>
            <shortName evidence="1">UR</shortName>
            <ecNumber evidence="1">3.1.4.-</ecNumber>
        </recommendedName>
    </domain>
</protein>
<organism>
    <name type="scientific">Yersinia pestis bv. Antiqua (strain Antiqua)</name>
    <dbReference type="NCBI Taxonomy" id="360102"/>
    <lineage>
        <taxon>Bacteria</taxon>
        <taxon>Pseudomonadati</taxon>
        <taxon>Pseudomonadota</taxon>
        <taxon>Gammaproteobacteria</taxon>
        <taxon>Enterobacterales</taxon>
        <taxon>Yersiniaceae</taxon>
        <taxon>Yersinia</taxon>
    </lineage>
</organism>
<name>GLND_YERPA</name>
<sequence>MSDNHTEHSLSLTLTPTISEQPALPSTYLDSDIHCPILKQRLDAFQRWQAEAFNSGTSAEVLIAARSDYIDHLLQRLWTFYGFDKVPETALVAVGGYGRGELHPLSDIDVLVLSKQRLNDEQAQRVGQLITLLWDLKLEVGHSVRTLEECLLEGLADLTIATNMIESRLICGDVALFLQMQKHIFSDSFWPSPQFFHAKVVEQQERHKRYHGTSYNLEPDIKSSPGGLRDIHTLLWVARRHFGATSLSEMVDFGFLTNAERNELNESQSFLWRIRFALHLVLTRYDNRLLFDRQLSVAQLLRYEGEGNEPVEHMMKDFYRMTRRVSELNNMLLQLFDEAILALDANEKPRPLDEEFQLRGDLIDLRDENLFVRQPEAIMRMFYLMVRNQDIKGIYSTTVRRLRHARRHLKAPLCHIPEARKLFMAILRHPGAVSRALLPMHRHSVLWAYMPQWGSIVGQMQFDLFHAYTVDEHTIRVLLKIESFADEDTRPRHPLCVELYPRLPQPELLLLAALFHDIAKGRGGDHSILGAHDAVEFAEQHGLNSRESQLVAWLVRCHLLMSVTAQRRDIQDPAVIQQFSAEVQSETRLRYLVSLTVADICATNENLWNSWKQSLLRELYFATEKQLRRGMQNSPDLRERVRHHRLQALALLRMDNIDEEALHRIWSRCRADYFLRHSPNQLAWHARHLLEHDSTKPLVLVSRQATRGGTEIFIWSPDRPSLFAAVVGELDRRNLSVHDAQIFTNRDGMAMDTFIVLEPDGSPLAQDRHPIISHALQQAINRSDYQHPPRVRRLSPKLRHFSVPTEANFLPTHNERRTYLELIALDQPGLLARVGKIFADLGLSLHSARITTIGERVEDLFVLADKDRRALSLETRRELAQRLADTLNPNDKL</sequence>